<evidence type="ECO:0000250" key="1">
    <source>
        <dbReference type="UniProtKB" id="P68871"/>
    </source>
</evidence>
<evidence type="ECO:0000250" key="2">
    <source>
        <dbReference type="UniProtKB" id="P69891"/>
    </source>
</evidence>
<evidence type="ECO:0000255" key="3">
    <source>
        <dbReference type="PROSITE-ProRule" id="PRU00238"/>
    </source>
</evidence>
<organism>
    <name type="scientific">Cebus albifrons</name>
    <name type="common">White-fronted capuchin</name>
    <dbReference type="NCBI Taxonomy" id="9514"/>
    <lineage>
        <taxon>Eukaryota</taxon>
        <taxon>Metazoa</taxon>
        <taxon>Chordata</taxon>
        <taxon>Craniata</taxon>
        <taxon>Vertebrata</taxon>
        <taxon>Euteleostomi</taxon>
        <taxon>Mammalia</taxon>
        <taxon>Eutheria</taxon>
        <taxon>Euarchontoglires</taxon>
        <taxon>Primates</taxon>
        <taxon>Haplorrhini</taxon>
        <taxon>Platyrrhini</taxon>
        <taxon>Cebidae</taxon>
        <taxon>Cebinae</taxon>
        <taxon>Cebus</taxon>
    </lineage>
</organism>
<gene>
    <name type="primary">HBG1</name>
</gene>
<proteinExistence type="evidence at transcript level"/>
<accession>Q28221</accession>
<feature type="chain" id="PRO_0000053242" description="Hemoglobin subunit gamma-1">
    <location>
        <begin position="1"/>
        <end position="147"/>
    </location>
</feature>
<feature type="domain" description="Globin" evidence="3">
    <location>
        <begin position="3"/>
        <end position="147"/>
    </location>
</feature>
<feature type="binding site" description="distal binding residue" evidence="3">
    <location>
        <position position="64"/>
    </location>
    <ligand>
        <name>heme b</name>
        <dbReference type="ChEBI" id="CHEBI:60344"/>
    </ligand>
    <ligandPart>
        <name>Fe</name>
        <dbReference type="ChEBI" id="CHEBI:18248"/>
    </ligandPart>
</feature>
<feature type="binding site" description="proximal binding residue" evidence="3">
    <location>
        <position position="93"/>
    </location>
    <ligand>
        <name>heme b</name>
        <dbReference type="ChEBI" id="CHEBI:60344"/>
    </ligand>
    <ligandPart>
        <name>Fe</name>
        <dbReference type="ChEBI" id="CHEBI:18248"/>
    </ligandPart>
</feature>
<feature type="modified residue" description="Phosphothreonine" evidence="1">
    <location>
        <position position="13"/>
    </location>
</feature>
<feature type="modified residue" description="Phosphoserine" evidence="2">
    <location>
        <position position="45"/>
    </location>
</feature>
<feature type="modified residue" description="Phosphoserine" evidence="2">
    <location>
        <position position="51"/>
    </location>
</feature>
<feature type="modified residue" description="Phosphoserine" evidence="2">
    <location>
        <position position="53"/>
    </location>
</feature>
<feature type="modified residue" description="N6-acetyllysine" evidence="1">
    <location>
        <position position="60"/>
    </location>
</feature>
<feature type="modified residue" description="N6-acetyllysine" evidence="1">
    <location>
        <position position="83"/>
    </location>
</feature>
<feature type="modified residue" description="S-nitrosocysteine" evidence="1">
    <location>
        <position position="94"/>
    </location>
</feature>
<feature type="modified residue" description="Phosphoserine" evidence="2">
    <location>
        <position position="140"/>
    </location>
</feature>
<protein>
    <recommendedName>
        <fullName>Hemoglobin subunit gamma-1</fullName>
    </recommendedName>
    <alternativeName>
        <fullName>Gamma-1-globin</fullName>
    </alternativeName>
    <alternativeName>
        <fullName>Hemoglobin gamma-1 chain</fullName>
    </alternativeName>
</protein>
<name>HBG1_CEBAL</name>
<reference key="1">
    <citation type="journal article" date="1993" name="Genomics">
        <title>The gamma-globin genes and their flanking sequences in primates: findings with nucleotide sequences of capuchin monkey and tarsier.</title>
        <authorList>
            <person name="Hayasaka K."/>
            <person name="Skinner C.G."/>
            <person name="Goodman M."/>
            <person name="Slightom J.L."/>
        </authorList>
    </citation>
    <scope>NUCLEOTIDE SEQUENCE</scope>
</reference>
<comment type="function">
    <text evidence="2">Gamma chains make up the fetal hemoglobin F, in combination with alpha chains.</text>
</comment>
<comment type="subunit">
    <text evidence="2">Heterotetramer of two alpha chains and two gamma chains in fetal hemoglobin (Hb F).</text>
</comment>
<comment type="tissue specificity">
    <text>Red blood cells.</text>
</comment>
<comment type="similarity">
    <text evidence="3">Belongs to the globin family.</text>
</comment>
<sequence length="147" mass="15922">MSNFTAEDKAAITSLWAKVNVEDAGGETLGRLLVVYPWTQRFFDSFGSLSSPSAIMGNPKVKAHGAKVLTSLGEAIKNLDDLKGTFGQLSELHCDKLHVDPENFRLLGNVLVTVLAVHHGKEFTPEVQASWQKMVAGVASALGSRYH</sequence>
<dbReference type="EMBL" id="M81409">
    <property type="protein sequence ID" value="AAA19703.1"/>
    <property type="status" value="ALT_SEQ"/>
    <property type="molecule type" value="Unassigned_DNA"/>
</dbReference>
<dbReference type="SMR" id="Q28221"/>
<dbReference type="GO" id="GO:0072562">
    <property type="term" value="C:blood microparticle"/>
    <property type="evidence" value="ECO:0007669"/>
    <property type="project" value="TreeGrafter"/>
</dbReference>
<dbReference type="GO" id="GO:0031838">
    <property type="term" value="C:haptoglobin-hemoglobin complex"/>
    <property type="evidence" value="ECO:0007669"/>
    <property type="project" value="TreeGrafter"/>
</dbReference>
<dbReference type="GO" id="GO:0005833">
    <property type="term" value="C:hemoglobin complex"/>
    <property type="evidence" value="ECO:0007669"/>
    <property type="project" value="InterPro"/>
</dbReference>
<dbReference type="GO" id="GO:0031720">
    <property type="term" value="F:haptoglobin binding"/>
    <property type="evidence" value="ECO:0007669"/>
    <property type="project" value="TreeGrafter"/>
</dbReference>
<dbReference type="GO" id="GO:0020037">
    <property type="term" value="F:heme binding"/>
    <property type="evidence" value="ECO:0007669"/>
    <property type="project" value="InterPro"/>
</dbReference>
<dbReference type="GO" id="GO:0031721">
    <property type="term" value="F:hemoglobin alpha binding"/>
    <property type="evidence" value="ECO:0007669"/>
    <property type="project" value="TreeGrafter"/>
</dbReference>
<dbReference type="GO" id="GO:0046872">
    <property type="term" value="F:metal ion binding"/>
    <property type="evidence" value="ECO:0007669"/>
    <property type="project" value="UniProtKB-KW"/>
</dbReference>
<dbReference type="GO" id="GO:0043177">
    <property type="term" value="F:organic acid binding"/>
    <property type="evidence" value="ECO:0007669"/>
    <property type="project" value="TreeGrafter"/>
</dbReference>
<dbReference type="GO" id="GO:0019825">
    <property type="term" value="F:oxygen binding"/>
    <property type="evidence" value="ECO:0007669"/>
    <property type="project" value="InterPro"/>
</dbReference>
<dbReference type="GO" id="GO:0005344">
    <property type="term" value="F:oxygen carrier activity"/>
    <property type="evidence" value="ECO:0007669"/>
    <property type="project" value="UniProtKB-KW"/>
</dbReference>
<dbReference type="GO" id="GO:0004601">
    <property type="term" value="F:peroxidase activity"/>
    <property type="evidence" value="ECO:0007669"/>
    <property type="project" value="TreeGrafter"/>
</dbReference>
<dbReference type="GO" id="GO:0042744">
    <property type="term" value="P:hydrogen peroxide catabolic process"/>
    <property type="evidence" value="ECO:0007669"/>
    <property type="project" value="TreeGrafter"/>
</dbReference>
<dbReference type="CDD" id="cd08925">
    <property type="entry name" value="Hb-beta-like"/>
    <property type="match status" value="1"/>
</dbReference>
<dbReference type="FunFam" id="1.10.490.10:FF:000001">
    <property type="entry name" value="Hemoglobin subunit beta"/>
    <property type="match status" value="1"/>
</dbReference>
<dbReference type="Gene3D" id="1.10.490.10">
    <property type="entry name" value="Globins"/>
    <property type="match status" value="1"/>
</dbReference>
<dbReference type="InterPro" id="IPR000971">
    <property type="entry name" value="Globin"/>
</dbReference>
<dbReference type="InterPro" id="IPR009050">
    <property type="entry name" value="Globin-like_sf"/>
</dbReference>
<dbReference type="InterPro" id="IPR012292">
    <property type="entry name" value="Globin/Proto"/>
</dbReference>
<dbReference type="InterPro" id="IPR002337">
    <property type="entry name" value="Hemoglobin_b"/>
</dbReference>
<dbReference type="InterPro" id="IPR050056">
    <property type="entry name" value="Hemoglobin_oxygen_transport"/>
</dbReference>
<dbReference type="PANTHER" id="PTHR11442">
    <property type="entry name" value="HEMOGLOBIN FAMILY MEMBER"/>
    <property type="match status" value="1"/>
</dbReference>
<dbReference type="PANTHER" id="PTHR11442:SF52">
    <property type="entry name" value="HEMOGLOBIN SUBUNIT GAMMA-1"/>
    <property type="match status" value="1"/>
</dbReference>
<dbReference type="Pfam" id="PF00042">
    <property type="entry name" value="Globin"/>
    <property type="match status" value="1"/>
</dbReference>
<dbReference type="PRINTS" id="PR00814">
    <property type="entry name" value="BETAHAEM"/>
</dbReference>
<dbReference type="SUPFAM" id="SSF46458">
    <property type="entry name" value="Globin-like"/>
    <property type="match status" value="1"/>
</dbReference>
<dbReference type="PROSITE" id="PS01033">
    <property type="entry name" value="GLOBIN"/>
    <property type="match status" value="1"/>
</dbReference>
<keyword id="KW-0007">Acetylation</keyword>
<keyword id="KW-0349">Heme</keyword>
<keyword id="KW-0408">Iron</keyword>
<keyword id="KW-0479">Metal-binding</keyword>
<keyword id="KW-0561">Oxygen transport</keyword>
<keyword id="KW-0597">Phosphoprotein</keyword>
<keyword id="KW-0702">S-nitrosylation</keyword>
<keyword id="KW-0813">Transport</keyword>